<name>ACR2_NEUCR</name>
<reference key="1">
    <citation type="journal article" date="1996" name="Biochim. Biophys. Acta">
        <title>Molecular cloning of the acr-2 gene which controls acriflavine sensitivity in Neurospora crassa.</title>
        <authorList>
            <person name="Akiyama M."/>
            <person name="Nakashima H."/>
        </authorList>
    </citation>
    <scope>NUCLEOTIDE SEQUENCE [GENOMIC DNA]</scope>
    <source>
        <strain>KH2</strain>
    </source>
</reference>
<reference key="2">
    <citation type="journal article" date="2003" name="Nature">
        <title>The genome sequence of the filamentous fungus Neurospora crassa.</title>
        <authorList>
            <person name="Galagan J.E."/>
            <person name="Calvo S.E."/>
            <person name="Borkovich K.A."/>
            <person name="Selker E.U."/>
            <person name="Read N.D."/>
            <person name="Jaffe D.B."/>
            <person name="FitzHugh W."/>
            <person name="Ma L.-J."/>
            <person name="Smirnov S."/>
            <person name="Purcell S."/>
            <person name="Rehman B."/>
            <person name="Elkins T."/>
            <person name="Engels R."/>
            <person name="Wang S."/>
            <person name="Nielsen C.B."/>
            <person name="Butler J."/>
            <person name="Endrizzi M."/>
            <person name="Qui D."/>
            <person name="Ianakiev P."/>
            <person name="Bell-Pedersen D."/>
            <person name="Nelson M.A."/>
            <person name="Werner-Washburne M."/>
            <person name="Selitrennikoff C.P."/>
            <person name="Kinsey J.A."/>
            <person name="Braun E.L."/>
            <person name="Zelter A."/>
            <person name="Schulte U."/>
            <person name="Kothe G.O."/>
            <person name="Jedd G."/>
            <person name="Mewes H.-W."/>
            <person name="Staben C."/>
            <person name="Marcotte E."/>
            <person name="Greenberg D."/>
            <person name="Roy A."/>
            <person name="Foley K."/>
            <person name="Naylor J."/>
            <person name="Stange-Thomann N."/>
            <person name="Barrett R."/>
            <person name="Gnerre S."/>
            <person name="Kamal M."/>
            <person name="Kamvysselis M."/>
            <person name="Mauceli E.W."/>
            <person name="Bielke C."/>
            <person name="Rudd S."/>
            <person name="Frishman D."/>
            <person name="Krystofova S."/>
            <person name="Rasmussen C."/>
            <person name="Metzenberg R.L."/>
            <person name="Perkins D.D."/>
            <person name="Kroken S."/>
            <person name="Cogoni C."/>
            <person name="Macino G."/>
            <person name="Catcheside D.E.A."/>
            <person name="Li W."/>
            <person name="Pratt R.J."/>
            <person name="Osmani S.A."/>
            <person name="DeSouza C.P.C."/>
            <person name="Glass N.L."/>
            <person name="Orbach M.J."/>
            <person name="Berglund J.A."/>
            <person name="Voelker R."/>
            <person name="Yarden O."/>
            <person name="Plamann M."/>
            <person name="Seiler S."/>
            <person name="Dunlap J.C."/>
            <person name="Radford A."/>
            <person name="Aramayo R."/>
            <person name="Natvig D.O."/>
            <person name="Alex L.A."/>
            <person name="Mannhaupt G."/>
            <person name="Ebbole D.J."/>
            <person name="Freitag M."/>
            <person name="Paulsen I."/>
            <person name="Sachs M.S."/>
            <person name="Lander E.S."/>
            <person name="Nusbaum C."/>
            <person name="Birren B.W."/>
        </authorList>
    </citation>
    <scope>NUCLEOTIDE SEQUENCE [LARGE SCALE GENOMIC DNA]</scope>
    <source>
        <strain>ATCC 24698 / 74-OR23-1A / CBS 708.71 / DSM 1257 / FGSC 987</strain>
    </source>
</reference>
<accession>P78704</accession>
<accession>Q7RVH5</accession>
<comment type="function">
    <text>Probable transcriptional regulator.</text>
</comment>
<comment type="subcellular location">
    <subcellularLocation>
        <location evidence="1">Nucleus</location>
    </subcellularLocation>
</comment>
<comment type="sequence caution" evidence="3">
    <conflict type="erroneous initiation">
        <sequence resource="EMBL-CDS" id="EAA33653"/>
    </conflict>
    <text>Extended N-terminus.</text>
</comment>
<evidence type="ECO:0000255" key="1">
    <source>
        <dbReference type="PROSITE-ProRule" id="PRU00227"/>
    </source>
</evidence>
<evidence type="ECO:0000256" key="2">
    <source>
        <dbReference type="SAM" id="MobiDB-lite"/>
    </source>
</evidence>
<evidence type="ECO:0000305" key="3"/>
<dbReference type="EMBL" id="D45893">
    <property type="protein sequence ID" value="BAA08308.1"/>
    <property type="molecule type" value="Genomic_DNA"/>
</dbReference>
<dbReference type="EMBL" id="CM002238">
    <property type="protein sequence ID" value="EAA33653.2"/>
    <property type="status" value="ALT_INIT"/>
    <property type="molecule type" value="Genomic_DNA"/>
</dbReference>
<dbReference type="PIR" id="S72537">
    <property type="entry name" value="S72537"/>
</dbReference>
<dbReference type="RefSeq" id="XP_962889.2">
    <property type="nucleotide sequence ID" value="XM_957796.2"/>
</dbReference>
<dbReference type="SMR" id="P78704"/>
<dbReference type="STRING" id="367110.P78704"/>
<dbReference type="PaxDb" id="5141-EFNCRP00000007654"/>
<dbReference type="EnsemblFungi" id="EAA33653">
    <property type="protein sequence ID" value="EAA33653"/>
    <property type="gene ID" value="NCU05733"/>
</dbReference>
<dbReference type="GeneID" id="3879039"/>
<dbReference type="KEGG" id="ncr:NCU05733"/>
<dbReference type="HOGENOM" id="CLU_020030_3_1_1"/>
<dbReference type="InParanoid" id="P78704"/>
<dbReference type="OMA" id="KQKAMGH"/>
<dbReference type="OrthoDB" id="5380854at2759"/>
<dbReference type="Proteomes" id="UP000001805">
    <property type="component" value="Chromosome 3, Linkage Group III"/>
</dbReference>
<dbReference type="GO" id="GO:0005634">
    <property type="term" value="C:nucleus"/>
    <property type="evidence" value="ECO:0000318"/>
    <property type="project" value="GO_Central"/>
</dbReference>
<dbReference type="GO" id="GO:0003700">
    <property type="term" value="F:DNA-binding transcription factor activity"/>
    <property type="evidence" value="ECO:0000318"/>
    <property type="project" value="GO_Central"/>
</dbReference>
<dbReference type="GO" id="GO:0000981">
    <property type="term" value="F:DNA-binding transcription factor activity, RNA polymerase II-specific"/>
    <property type="evidence" value="ECO:0007669"/>
    <property type="project" value="InterPro"/>
</dbReference>
<dbReference type="GO" id="GO:0000976">
    <property type="term" value="F:transcription cis-regulatory region binding"/>
    <property type="evidence" value="ECO:0000318"/>
    <property type="project" value="GO_Central"/>
</dbReference>
<dbReference type="GO" id="GO:0008270">
    <property type="term" value="F:zinc ion binding"/>
    <property type="evidence" value="ECO:0007669"/>
    <property type="project" value="InterPro"/>
</dbReference>
<dbReference type="GO" id="GO:0045944">
    <property type="term" value="P:positive regulation of transcription by RNA polymerase II"/>
    <property type="evidence" value="ECO:0000318"/>
    <property type="project" value="GO_Central"/>
</dbReference>
<dbReference type="CDD" id="cd00067">
    <property type="entry name" value="GAL4"/>
    <property type="match status" value="1"/>
</dbReference>
<dbReference type="Gene3D" id="4.10.240.10">
    <property type="entry name" value="Zn(2)-C6 fungal-type DNA-binding domain"/>
    <property type="match status" value="1"/>
</dbReference>
<dbReference type="InterPro" id="IPR021858">
    <property type="entry name" value="Fun_TF"/>
</dbReference>
<dbReference type="InterPro" id="IPR036864">
    <property type="entry name" value="Zn2-C6_fun-type_DNA-bd_sf"/>
</dbReference>
<dbReference type="InterPro" id="IPR001138">
    <property type="entry name" value="Zn2Cys6_DnaBD"/>
</dbReference>
<dbReference type="PANTHER" id="PTHR37534:SF51">
    <property type="entry name" value="ACRIFLAVINE SENSITIVITY CONTROL PROTEIN ACR-2"/>
    <property type="match status" value="1"/>
</dbReference>
<dbReference type="PANTHER" id="PTHR37534">
    <property type="entry name" value="TRANSCRIPTIONAL ACTIVATOR PROTEIN UGA3"/>
    <property type="match status" value="1"/>
</dbReference>
<dbReference type="Pfam" id="PF11951">
    <property type="entry name" value="Fungal_trans_2"/>
    <property type="match status" value="1"/>
</dbReference>
<dbReference type="Pfam" id="PF00172">
    <property type="entry name" value="Zn_clus"/>
    <property type="match status" value="1"/>
</dbReference>
<dbReference type="SMART" id="SM00066">
    <property type="entry name" value="GAL4"/>
    <property type="match status" value="1"/>
</dbReference>
<dbReference type="SUPFAM" id="SSF57701">
    <property type="entry name" value="Zn2/Cys6 DNA-binding domain"/>
    <property type="match status" value="1"/>
</dbReference>
<dbReference type="PROSITE" id="PS00463">
    <property type="entry name" value="ZN2_CY6_FUNGAL_1"/>
    <property type="match status" value="1"/>
</dbReference>
<dbReference type="PROSITE" id="PS50048">
    <property type="entry name" value="ZN2_CY6_FUNGAL_2"/>
    <property type="match status" value="1"/>
</dbReference>
<sequence length="595" mass="65326">MALKKMPPKKPYHQKASKTKACYNCHRKRLRCDKSLPACLKCSINGEECLGYGIVLRWAACNSPTSTITTRTTNKTNFNGTNTTTPRTVKSSTPTQAPTPSDSPRQLDTDVTSSSAPSHTCSRSTTTSTTTTRISSPTLEETIDSFTVETPIDNNVDPLPRAPDDNPDPSSQIIKRPVNLIKIPLTDPLLNGLSTKARWYMHHFATIVCRDLVSIDQKERNPFRAIIPLVRKFDYLQSVVLATAAMHLSTIHKYQGRSLPSESALVDALMLKSRALHLLRAAINDNTLTDKAMILSAIVFLVNLDLIDSGRGGWKAHVGAARRLISSLYLTKAHLDGAIAPLVNAIAADCLTYRIYGSTISGNTSSWSDNTIDDGVVLPYILQNAEAYSYHCAPPAILQIILSASQLCSGSSTTLETDGGAGRIVTAAALLHKARNFDVQTWVYNIKGLPPDDDLEARVSVASAHRAAACLFVLLSVPETGLLEIPLLEPKDLVQEILGHLSCIPDNHVHLKGTVWPTFVVGAETDDLSERAWCLERLVAVWTKNPWTYPWGYVHTAMEMLQEIWRLKDLAAQQGDDGINWLQRLKATENSCLIV</sequence>
<feature type="chain" id="PRO_0000114930" description="Acriflavine sensitivity control protein acr-2">
    <location>
        <begin position="1"/>
        <end position="595"/>
    </location>
</feature>
<feature type="DNA-binding region" description="Zn(2)-C6 fungal-type" evidence="1">
    <location>
        <begin position="22"/>
        <end position="49"/>
    </location>
</feature>
<feature type="region of interest" description="Disordered" evidence="2">
    <location>
        <begin position="69"/>
        <end position="172"/>
    </location>
</feature>
<feature type="compositionally biased region" description="Low complexity" evidence="2">
    <location>
        <begin position="69"/>
        <end position="88"/>
    </location>
</feature>
<feature type="compositionally biased region" description="Polar residues" evidence="2">
    <location>
        <begin position="89"/>
        <end position="117"/>
    </location>
</feature>
<feature type="compositionally biased region" description="Low complexity" evidence="2">
    <location>
        <begin position="118"/>
        <end position="138"/>
    </location>
</feature>
<feature type="sequence variant" description="Confers acriflavine-resistance.">
    <original>N</original>
    <variation>K</variation>
    <location>
        <position position="303"/>
    </location>
</feature>
<feature type="sequence conflict" description="In Ref. 1; BAA08308." evidence="3" ref="1">
    <original>F</original>
    <variation>V</variation>
    <location>
        <position position="204"/>
    </location>
</feature>
<keyword id="KW-0238">DNA-binding</keyword>
<keyword id="KW-0479">Metal-binding</keyword>
<keyword id="KW-0539">Nucleus</keyword>
<keyword id="KW-1185">Reference proteome</keyword>
<keyword id="KW-0804">Transcription</keyword>
<keyword id="KW-0805">Transcription regulation</keyword>
<keyword id="KW-0862">Zinc</keyword>
<protein>
    <recommendedName>
        <fullName>Acriflavine sensitivity control protein acr-2</fullName>
    </recommendedName>
</protein>
<organism>
    <name type="scientific">Neurospora crassa (strain ATCC 24698 / 74-OR23-1A / CBS 708.71 / DSM 1257 / FGSC 987)</name>
    <dbReference type="NCBI Taxonomy" id="367110"/>
    <lineage>
        <taxon>Eukaryota</taxon>
        <taxon>Fungi</taxon>
        <taxon>Dikarya</taxon>
        <taxon>Ascomycota</taxon>
        <taxon>Pezizomycotina</taxon>
        <taxon>Sordariomycetes</taxon>
        <taxon>Sordariomycetidae</taxon>
        <taxon>Sordariales</taxon>
        <taxon>Sordariaceae</taxon>
        <taxon>Neurospora</taxon>
    </lineage>
</organism>
<gene>
    <name type="primary">acr-2</name>
    <name type="ORF">NCU05733</name>
</gene>
<proteinExistence type="inferred from homology"/>